<accession>Q037Z6</accession>
<name>SYT_LACP3</name>
<gene>
    <name evidence="1" type="primary">thrS</name>
    <name type="ordered locus">LSEI_1703</name>
</gene>
<proteinExistence type="inferred from homology"/>
<feature type="chain" id="PRO_1000020409" description="Threonine--tRNA ligase">
    <location>
        <begin position="1"/>
        <end position="657"/>
    </location>
</feature>
<feature type="domain" description="TGS" evidence="2">
    <location>
        <begin position="1"/>
        <end position="62"/>
    </location>
</feature>
<feature type="region of interest" description="Catalytic" evidence="1">
    <location>
        <begin position="240"/>
        <end position="538"/>
    </location>
</feature>
<feature type="binding site" evidence="1">
    <location>
        <position position="334"/>
    </location>
    <ligand>
        <name>Zn(2+)</name>
        <dbReference type="ChEBI" id="CHEBI:29105"/>
    </ligand>
</feature>
<feature type="binding site" evidence="1">
    <location>
        <position position="385"/>
    </location>
    <ligand>
        <name>Zn(2+)</name>
        <dbReference type="ChEBI" id="CHEBI:29105"/>
    </ligand>
</feature>
<feature type="binding site" evidence="1">
    <location>
        <position position="515"/>
    </location>
    <ligand>
        <name>Zn(2+)</name>
        <dbReference type="ChEBI" id="CHEBI:29105"/>
    </ligand>
</feature>
<organism>
    <name type="scientific">Lacticaseibacillus paracasei (strain ATCC 334 / BCRC 17002 / CCUG 31169 / CIP 107868 / KCTC 3260 / NRRL B-441)</name>
    <name type="common">Lactobacillus paracasei</name>
    <dbReference type="NCBI Taxonomy" id="321967"/>
    <lineage>
        <taxon>Bacteria</taxon>
        <taxon>Bacillati</taxon>
        <taxon>Bacillota</taxon>
        <taxon>Bacilli</taxon>
        <taxon>Lactobacillales</taxon>
        <taxon>Lactobacillaceae</taxon>
        <taxon>Lacticaseibacillus</taxon>
    </lineage>
</organism>
<dbReference type="EC" id="6.1.1.3" evidence="1"/>
<dbReference type="EMBL" id="CP000423">
    <property type="protein sequence ID" value="ABJ70476.1"/>
    <property type="molecule type" value="Genomic_DNA"/>
</dbReference>
<dbReference type="RefSeq" id="WP_003594826.1">
    <property type="nucleotide sequence ID" value="NC_008526.1"/>
</dbReference>
<dbReference type="RefSeq" id="YP_806918.1">
    <property type="nucleotide sequence ID" value="NC_008526.1"/>
</dbReference>
<dbReference type="SMR" id="Q037Z6"/>
<dbReference type="STRING" id="321967.LSEI_1703"/>
<dbReference type="PaxDb" id="321967-LSEI_1703"/>
<dbReference type="KEGG" id="lca:LSEI_1703"/>
<dbReference type="PATRIC" id="fig|321967.11.peg.1683"/>
<dbReference type="HOGENOM" id="CLU_008554_0_1_9"/>
<dbReference type="Proteomes" id="UP000001651">
    <property type="component" value="Chromosome"/>
</dbReference>
<dbReference type="GO" id="GO:0005737">
    <property type="term" value="C:cytoplasm"/>
    <property type="evidence" value="ECO:0007669"/>
    <property type="project" value="UniProtKB-SubCell"/>
</dbReference>
<dbReference type="GO" id="GO:0005524">
    <property type="term" value="F:ATP binding"/>
    <property type="evidence" value="ECO:0007669"/>
    <property type="project" value="UniProtKB-UniRule"/>
</dbReference>
<dbReference type="GO" id="GO:0140096">
    <property type="term" value="F:catalytic activity, acting on a protein"/>
    <property type="evidence" value="ECO:0007669"/>
    <property type="project" value="UniProtKB-ARBA"/>
</dbReference>
<dbReference type="GO" id="GO:0046872">
    <property type="term" value="F:metal ion binding"/>
    <property type="evidence" value="ECO:0007669"/>
    <property type="project" value="UniProtKB-KW"/>
</dbReference>
<dbReference type="GO" id="GO:0004829">
    <property type="term" value="F:threonine-tRNA ligase activity"/>
    <property type="evidence" value="ECO:0007669"/>
    <property type="project" value="UniProtKB-UniRule"/>
</dbReference>
<dbReference type="GO" id="GO:0016740">
    <property type="term" value="F:transferase activity"/>
    <property type="evidence" value="ECO:0007669"/>
    <property type="project" value="UniProtKB-ARBA"/>
</dbReference>
<dbReference type="GO" id="GO:0000049">
    <property type="term" value="F:tRNA binding"/>
    <property type="evidence" value="ECO:0007669"/>
    <property type="project" value="UniProtKB-KW"/>
</dbReference>
<dbReference type="GO" id="GO:0006435">
    <property type="term" value="P:threonyl-tRNA aminoacylation"/>
    <property type="evidence" value="ECO:0007669"/>
    <property type="project" value="UniProtKB-UniRule"/>
</dbReference>
<dbReference type="CDD" id="cd01667">
    <property type="entry name" value="TGS_ThrRS"/>
    <property type="match status" value="1"/>
</dbReference>
<dbReference type="CDD" id="cd00860">
    <property type="entry name" value="ThrRS_anticodon"/>
    <property type="match status" value="1"/>
</dbReference>
<dbReference type="CDD" id="cd00771">
    <property type="entry name" value="ThrRS_core"/>
    <property type="match status" value="1"/>
</dbReference>
<dbReference type="FunFam" id="3.30.930.10:FF:000002">
    <property type="entry name" value="Threonine--tRNA ligase"/>
    <property type="match status" value="1"/>
</dbReference>
<dbReference type="FunFam" id="3.40.50.800:FF:000001">
    <property type="entry name" value="Threonine--tRNA ligase"/>
    <property type="match status" value="1"/>
</dbReference>
<dbReference type="Gene3D" id="3.10.20.30">
    <property type="match status" value="1"/>
</dbReference>
<dbReference type="Gene3D" id="3.30.54.20">
    <property type="match status" value="1"/>
</dbReference>
<dbReference type="Gene3D" id="3.40.50.800">
    <property type="entry name" value="Anticodon-binding domain"/>
    <property type="match status" value="1"/>
</dbReference>
<dbReference type="Gene3D" id="3.30.930.10">
    <property type="entry name" value="Bira Bifunctional Protein, Domain 2"/>
    <property type="match status" value="1"/>
</dbReference>
<dbReference type="Gene3D" id="3.30.980.10">
    <property type="entry name" value="Threonyl-trna Synthetase, Chain A, domain 2"/>
    <property type="match status" value="1"/>
</dbReference>
<dbReference type="HAMAP" id="MF_00184">
    <property type="entry name" value="Thr_tRNA_synth"/>
    <property type="match status" value="1"/>
</dbReference>
<dbReference type="InterPro" id="IPR002314">
    <property type="entry name" value="aa-tRNA-synt_IIb"/>
</dbReference>
<dbReference type="InterPro" id="IPR006195">
    <property type="entry name" value="aa-tRNA-synth_II"/>
</dbReference>
<dbReference type="InterPro" id="IPR045864">
    <property type="entry name" value="aa-tRNA-synth_II/BPL/LPL"/>
</dbReference>
<dbReference type="InterPro" id="IPR004154">
    <property type="entry name" value="Anticodon-bd"/>
</dbReference>
<dbReference type="InterPro" id="IPR036621">
    <property type="entry name" value="Anticodon-bd_dom_sf"/>
</dbReference>
<dbReference type="InterPro" id="IPR012675">
    <property type="entry name" value="Beta-grasp_dom_sf"/>
</dbReference>
<dbReference type="InterPro" id="IPR004095">
    <property type="entry name" value="TGS"/>
</dbReference>
<dbReference type="InterPro" id="IPR012676">
    <property type="entry name" value="TGS-like"/>
</dbReference>
<dbReference type="InterPro" id="IPR002320">
    <property type="entry name" value="Thr-tRNA-ligase_IIa"/>
</dbReference>
<dbReference type="InterPro" id="IPR018163">
    <property type="entry name" value="Thr/Ala-tRNA-synth_IIc_edit"/>
</dbReference>
<dbReference type="InterPro" id="IPR047246">
    <property type="entry name" value="ThrRS_anticodon"/>
</dbReference>
<dbReference type="InterPro" id="IPR033728">
    <property type="entry name" value="ThrRS_core"/>
</dbReference>
<dbReference type="InterPro" id="IPR012947">
    <property type="entry name" value="tRNA_SAD"/>
</dbReference>
<dbReference type="NCBIfam" id="TIGR00418">
    <property type="entry name" value="thrS"/>
    <property type="match status" value="1"/>
</dbReference>
<dbReference type="PANTHER" id="PTHR11451:SF56">
    <property type="entry name" value="THREONINE--TRNA LIGASE 1"/>
    <property type="match status" value="1"/>
</dbReference>
<dbReference type="PANTHER" id="PTHR11451">
    <property type="entry name" value="THREONINE-TRNA LIGASE"/>
    <property type="match status" value="1"/>
</dbReference>
<dbReference type="Pfam" id="PF03129">
    <property type="entry name" value="HGTP_anticodon"/>
    <property type="match status" value="1"/>
</dbReference>
<dbReference type="Pfam" id="PF02824">
    <property type="entry name" value="TGS"/>
    <property type="match status" value="1"/>
</dbReference>
<dbReference type="Pfam" id="PF00587">
    <property type="entry name" value="tRNA-synt_2b"/>
    <property type="match status" value="1"/>
</dbReference>
<dbReference type="PRINTS" id="PR01047">
    <property type="entry name" value="TRNASYNTHTHR"/>
</dbReference>
<dbReference type="SMART" id="SM00863">
    <property type="entry name" value="tRNA_SAD"/>
    <property type="match status" value="1"/>
</dbReference>
<dbReference type="SUPFAM" id="SSF52954">
    <property type="entry name" value="Class II aaRS ABD-related"/>
    <property type="match status" value="1"/>
</dbReference>
<dbReference type="SUPFAM" id="SSF55681">
    <property type="entry name" value="Class II aaRS and biotin synthetases"/>
    <property type="match status" value="1"/>
</dbReference>
<dbReference type="SUPFAM" id="SSF81271">
    <property type="entry name" value="TGS-like"/>
    <property type="match status" value="1"/>
</dbReference>
<dbReference type="SUPFAM" id="SSF55186">
    <property type="entry name" value="ThrRS/AlaRS common domain"/>
    <property type="match status" value="1"/>
</dbReference>
<dbReference type="PROSITE" id="PS50862">
    <property type="entry name" value="AA_TRNA_LIGASE_II"/>
    <property type="match status" value="1"/>
</dbReference>
<dbReference type="PROSITE" id="PS51880">
    <property type="entry name" value="TGS"/>
    <property type="match status" value="1"/>
</dbReference>
<keyword id="KW-0030">Aminoacyl-tRNA synthetase</keyword>
<keyword id="KW-0067">ATP-binding</keyword>
<keyword id="KW-0963">Cytoplasm</keyword>
<keyword id="KW-0436">Ligase</keyword>
<keyword id="KW-0479">Metal-binding</keyword>
<keyword id="KW-0547">Nucleotide-binding</keyword>
<keyword id="KW-0648">Protein biosynthesis</keyword>
<keyword id="KW-1185">Reference proteome</keyword>
<keyword id="KW-0694">RNA-binding</keyword>
<keyword id="KW-0820">tRNA-binding</keyword>
<keyword id="KW-0862">Zinc</keyword>
<sequence length="657" mass="74616">MALDITFPDGNVKQFPDGTTVKAITEGISNSLAKKAVAGKLDGDLIAYDEPIAHSGQLQIMTKDDAEGLTVLRQTAAFVLAAALKDLYPDIHFGQGQATEDGFYYDTDRADGQVSVDDLPTVQKKMEAIIKENAALEPVVLSRAEAFQAFKNDPFKKQLVEAAGDPIKGYKLGDFVDFEEKVLLPSLKDLKHLKLLSVAGAYWQGKSSNPMLQRIYGTAYWSEKGLEDDAKRRQEAAEHDHRVIGRDLDLFFVDPKVGAGLPYWMPNGATIRRVIERYIIDKEIADGYEHVYTPVLANLDLYKTSGHWDHYREDMFPPMDMGDGEMLELRPMNCPSHIQIYNHHIRSYRELPLRIAELGMMHRYEKSGALSGLQRVREMTLNDGHTFVALDQVQEEFKKILRLIMDVYEDFNITDYSFRLSYRDPKNTEKYFDDDEMWTRSQSMLKGAMDDLKLDYYEAEGEAAFYGPKLDIQTKTALGNDETMSTIQLDFMLPERFNLTYVGKDGEEHRPVMIHRGIVGTMERFIAYLTEIYKGAFPTWLAPTQAVLIPVNNDLHLDYVNRIKKQMLVAGLRVKVDDRNEKMGYKIREAQTKKIPYTVVVGDKELNDAAVSVRRYGDEHTEEEAGNMFIDALVAEVKNYSRDGKTKPGEATKVLGD</sequence>
<reference key="1">
    <citation type="journal article" date="2006" name="Proc. Natl. Acad. Sci. U.S.A.">
        <title>Comparative genomics of the lactic acid bacteria.</title>
        <authorList>
            <person name="Makarova K.S."/>
            <person name="Slesarev A."/>
            <person name="Wolf Y.I."/>
            <person name="Sorokin A."/>
            <person name="Mirkin B."/>
            <person name="Koonin E.V."/>
            <person name="Pavlov A."/>
            <person name="Pavlova N."/>
            <person name="Karamychev V."/>
            <person name="Polouchine N."/>
            <person name="Shakhova V."/>
            <person name="Grigoriev I."/>
            <person name="Lou Y."/>
            <person name="Rohksar D."/>
            <person name="Lucas S."/>
            <person name="Huang K."/>
            <person name="Goodstein D.M."/>
            <person name="Hawkins T."/>
            <person name="Plengvidhya V."/>
            <person name="Welker D."/>
            <person name="Hughes J."/>
            <person name="Goh Y."/>
            <person name="Benson A."/>
            <person name="Baldwin K."/>
            <person name="Lee J.-H."/>
            <person name="Diaz-Muniz I."/>
            <person name="Dosti B."/>
            <person name="Smeianov V."/>
            <person name="Wechter W."/>
            <person name="Barabote R."/>
            <person name="Lorca G."/>
            <person name="Altermann E."/>
            <person name="Barrangou R."/>
            <person name="Ganesan B."/>
            <person name="Xie Y."/>
            <person name="Rawsthorne H."/>
            <person name="Tamir D."/>
            <person name="Parker C."/>
            <person name="Breidt F."/>
            <person name="Broadbent J.R."/>
            <person name="Hutkins R."/>
            <person name="O'Sullivan D."/>
            <person name="Steele J."/>
            <person name="Unlu G."/>
            <person name="Saier M.H. Jr."/>
            <person name="Klaenhammer T."/>
            <person name="Richardson P."/>
            <person name="Kozyavkin S."/>
            <person name="Weimer B.C."/>
            <person name="Mills D.A."/>
        </authorList>
    </citation>
    <scope>NUCLEOTIDE SEQUENCE [LARGE SCALE GENOMIC DNA]</scope>
    <source>
        <strain>ATCC 334 / BCRC 17002 / CCUG 31169 / CIP 107868 / KCTC 3260 / NRRL B-441</strain>
    </source>
</reference>
<comment type="function">
    <text evidence="1">Catalyzes the attachment of threonine to tRNA(Thr) in a two-step reaction: L-threonine is first activated by ATP to form Thr-AMP and then transferred to the acceptor end of tRNA(Thr). Also edits incorrectly charged L-seryl-tRNA(Thr).</text>
</comment>
<comment type="catalytic activity">
    <reaction evidence="1">
        <text>tRNA(Thr) + L-threonine + ATP = L-threonyl-tRNA(Thr) + AMP + diphosphate + H(+)</text>
        <dbReference type="Rhea" id="RHEA:24624"/>
        <dbReference type="Rhea" id="RHEA-COMP:9670"/>
        <dbReference type="Rhea" id="RHEA-COMP:9704"/>
        <dbReference type="ChEBI" id="CHEBI:15378"/>
        <dbReference type="ChEBI" id="CHEBI:30616"/>
        <dbReference type="ChEBI" id="CHEBI:33019"/>
        <dbReference type="ChEBI" id="CHEBI:57926"/>
        <dbReference type="ChEBI" id="CHEBI:78442"/>
        <dbReference type="ChEBI" id="CHEBI:78534"/>
        <dbReference type="ChEBI" id="CHEBI:456215"/>
        <dbReference type="EC" id="6.1.1.3"/>
    </reaction>
</comment>
<comment type="cofactor">
    <cofactor evidence="1">
        <name>Zn(2+)</name>
        <dbReference type="ChEBI" id="CHEBI:29105"/>
    </cofactor>
    <text evidence="1">Binds 1 zinc ion per subunit.</text>
</comment>
<comment type="subunit">
    <text evidence="1">Homodimer.</text>
</comment>
<comment type="subcellular location">
    <subcellularLocation>
        <location evidence="1">Cytoplasm</location>
    </subcellularLocation>
</comment>
<comment type="similarity">
    <text evidence="1">Belongs to the class-II aminoacyl-tRNA synthetase family.</text>
</comment>
<evidence type="ECO:0000255" key="1">
    <source>
        <dbReference type="HAMAP-Rule" id="MF_00184"/>
    </source>
</evidence>
<evidence type="ECO:0000255" key="2">
    <source>
        <dbReference type="PROSITE-ProRule" id="PRU01228"/>
    </source>
</evidence>
<protein>
    <recommendedName>
        <fullName evidence="1">Threonine--tRNA ligase</fullName>
        <ecNumber evidence="1">6.1.1.3</ecNumber>
    </recommendedName>
    <alternativeName>
        <fullName evidence="1">Threonyl-tRNA synthetase</fullName>
        <shortName evidence="1">ThrRS</shortName>
    </alternativeName>
</protein>